<gene>
    <name evidence="1" type="primary">hisC</name>
    <name type="ordered locus">GSU3099</name>
</gene>
<keyword id="KW-0028">Amino-acid biosynthesis</keyword>
<keyword id="KW-0032">Aminotransferase</keyword>
<keyword id="KW-0368">Histidine biosynthesis</keyword>
<keyword id="KW-0663">Pyridoxal phosphate</keyword>
<keyword id="KW-1185">Reference proteome</keyword>
<keyword id="KW-0808">Transferase</keyword>
<protein>
    <recommendedName>
        <fullName evidence="1">Histidinol-phosphate aminotransferase</fullName>
        <ecNumber evidence="1">2.6.1.9</ecNumber>
    </recommendedName>
    <alternativeName>
        <fullName evidence="1">Imidazole acetol-phosphate transaminase</fullName>
    </alternativeName>
</protein>
<accession>P61000</accession>
<evidence type="ECO:0000255" key="1">
    <source>
        <dbReference type="HAMAP-Rule" id="MF_01023"/>
    </source>
</evidence>
<organism>
    <name type="scientific">Geobacter sulfurreducens (strain ATCC 51573 / DSM 12127 / PCA)</name>
    <dbReference type="NCBI Taxonomy" id="243231"/>
    <lineage>
        <taxon>Bacteria</taxon>
        <taxon>Pseudomonadati</taxon>
        <taxon>Thermodesulfobacteriota</taxon>
        <taxon>Desulfuromonadia</taxon>
        <taxon>Geobacterales</taxon>
        <taxon>Geobacteraceae</taxon>
        <taxon>Geobacter</taxon>
    </lineage>
</organism>
<dbReference type="EC" id="2.6.1.9" evidence="1"/>
<dbReference type="EMBL" id="AE017180">
    <property type="protein sequence ID" value="AAR36490.1"/>
    <property type="molecule type" value="Genomic_DNA"/>
</dbReference>
<dbReference type="RefSeq" id="NP_954140.1">
    <property type="nucleotide sequence ID" value="NC_002939.5"/>
</dbReference>
<dbReference type="RefSeq" id="WP_010943720.1">
    <property type="nucleotide sequence ID" value="NC_002939.5"/>
</dbReference>
<dbReference type="SMR" id="P61000"/>
<dbReference type="FunCoup" id="P61000">
    <property type="interactions" value="471"/>
</dbReference>
<dbReference type="STRING" id="243231.GSU3099"/>
<dbReference type="EnsemblBacteria" id="AAR36490">
    <property type="protein sequence ID" value="AAR36490"/>
    <property type="gene ID" value="GSU3099"/>
</dbReference>
<dbReference type="KEGG" id="gsu:GSU3099"/>
<dbReference type="PATRIC" id="fig|243231.5.peg.3123"/>
<dbReference type="eggNOG" id="COG0079">
    <property type="taxonomic scope" value="Bacteria"/>
</dbReference>
<dbReference type="HOGENOM" id="CLU_017584_3_0_7"/>
<dbReference type="InParanoid" id="P61000"/>
<dbReference type="OrthoDB" id="9813612at2"/>
<dbReference type="UniPathway" id="UPA00031">
    <property type="reaction ID" value="UER00012"/>
</dbReference>
<dbReference type="Proteomes" id="UP000000577">
    <property type="component" value="Chromosome"/>
</dbReference>
<dbReference type="GO" id="GO:0004400">
    <property type="term" value="F:histidinol-phosphate transaminase activity"/>
    <property type="evidence" value="ECO:0007669"/>
    <property type="project" value="UniProtKB-UniRule"/>
</dbReference>
<dbReference type="GO" id="GO:0030170">
    <property type="term" value="F:pyridoxal phosphate binding"/>
    <property type="evidence" value="ECO:0007669"/>
    <property type="project" value="InterPro"/>
</dbReference>
<dbReference type="GO" id="GO:0000105">
    <property type="term" value="P:L-histidine biosynthetic process"/>
    <property type="evidence" value="ECO:0007669"/>
    <property type="project" value="UniProtKB-UniRule"/>
</dbReference>
<dbReference type="CDD" id="cd00609">
    <property type="entry name" value="AAT_like"/>
    <property type="match status" value="1"/>
</dbReference>
<dbReference type="Gene3D" id="3.90.1150.10">
    <property type="entry name" value="Aspartate Aminotransferase, domain 1"/>
    <property type="match status" value="1"/>
</dbReference>
<dbReference type="Gene3D" id="3.40.640.10">
    <property type="entry name" value="Type I PLP-dependent aspartate aminotransferase-like (Major domain)"/>
    <property type="match status" value="1"/>
</dbReference>
<dbReference type="HAMAP" id="MF_01023">
    <property type="entry name" value="HisC_aminotrans_2"/>
    <property type="match status" value="1"/>
</dbReference>
<dbReference type="InterPro" id="IPR001917">
    <property type="entry name" value="Aminotrans_II_pyridoxalP_BS"/>
</dbReference>
<dbReference type="InterPro" id="IPR004839">
    <property type="entry name" value="Aminotransferase_I/II_large"/>
</dbReference>
<dbReference type="InterPro" id="IPR005861">
    <property type="entry name" value="HisP_aminotrans"/>
</dbReference>
<dbReference type="InterPro" id="IPR015424">
    <property type="entry name" value="PyrdxlP-dep_Trfase"/>
</dbReference>
<dbReference type="InterPro" id="IPR015421">
    <property type="entry name" value="PyrdxlP-dep_Trfase_major"/>
</dbReference>
<dbReference type="InterPro" id="IPR015422">
    <property type="entry name" value="PyrdxlP-dep_Trfase_small"/>
</dbReference>
<dbReference type="NCBIfam" id="TIGR01141">
    <property type="entry name" value="hisC"/>
    <property type="match status" value="1"/>
</dbReference>
<dbReference type="PANTHER" id="PTHR42885:SF2">
    <property type="entry name" value="HISTIDINOL-PHOSPHATE AMINOTRANSFERASE"/>
    <property type="match status" value="1"/>
</dbReference>
<dbReference type="PANTHER" id="PTHR42885">
    <property type="entry name" value="HISTIDINOL-PHOSPHATE AMINOTRANSFERASE-RELATED"/>
    <property type="match status" value="1"/>
</dbReference>
<dbReference type="Pfam" id="PF00155">
    <property type="entry name" value="Aminotran_1_2"/>
    <property type="match status" value="1"/>
</dbReference>
<dbReference type="SUPFAM" id="SSF53383">
    <property type="entry name" value="PLP-dependent transferases"/>
    <property type="match status" value="1"/>
</dbReference>
<dbReference type="PROSITE" id="PS00599">
    <property type="entry name" value="AA_TRANSFER_CLASS_2"/>
    <property type="match status" value="1"/>
</dbReference>
<proteinExistence type="inferred from homology"/>
<reference key="1">
    <citation type="journal article" date="2003" name="Science">
        <title>Genome of Geobacter sulfurreducens: metal reduction in subsurface environments.</title>
        <authorList>
            <person name="Methe B.A."/>
            <person name="Nelson K.E."/>
            <person name="Eisen J.A."/>
            <person name="Paulsen I.T."/>
            <person name="Nelson W.C."/>
            <person name="Heidelberg J.F."/>
            <person name="Wu D."/>
            <person name="Wu M."/>
            <person name="Ward N.L."/>
            <person name="Beanan M.J."/>
            <person name="Dodson R.J."/>
            <person name="Madupu R."/>
            <person name="Brinkac L.M."/>
            <person name="Daugherty S.C."/>
            <person name="DeBoy R.T."/>
            <person name="Durkin A.S."/>
            <person name="Gwinn M.L."/>
            <person name="Kolonay J.F."/>
            <person name="Sullivan S.A."/>
            <person name="Haft D.H."/>
            <person name="Selengut J."/>
            <person name="Davidsen T.M."/>
            <person name="Zafar N."/>
            <person name="White O."/>
            <person name="Tran B."/>
            <person name="Romero C."/>
            <person name="Forberger H.A."/>
            <person name="Weidman J.F."/>
            <person name="Khouri H.M."/>
            <person name="Feldblyum T.V."/>
            <person name="Utterback T.R."/>
            <person name="Van Aken S.E."/>
            <person name="Lovley D.R."/>
            <person name="Fraser C.M."/>
        </authorList>
    </citation>
    <scope>NUCLEOTIDE SEQUENCE [LARGE SCALE GENOMIC DNA]</scope>
    <source>
        <strain>ATCC 51573 / DSM 12127 / PCA</strain>
    </source>
</reference>
<comment type="catalytic activity">
    <reaction evidence="1">
        <text>L-histidinol phosphate + 2-oxoglutarate = 3-(imidazol-4-yl)-2-oxopropyl phosphate + L-glutamate</text>
        <dbReference type="Rhea" id="RHEA:23744"/>
        <dbReference type="ChEBI" id="CHEBI:16810"/>
        <dbReference type="ChEBI" id="CHEBI:29985"/>
        <dbReference type="ChEBI" id="CHEBI:57766"/>
        <dbReference type="ChEBI" id="CHEBI:57980"/>
        <dbReference type="EC" id="2.6.1.9"/>
    </reaction>
</comment>
<comment type="cofactor">
    <cofactor evidence="1">
        <name>pyridoxal 5'-phosphate</name>
        <dbReference type="ChEBI" id="CHEBI:597326"/>
    </cofactor>
</comment>
<comment type="pathway">
    <text evidence="1">Amino-acid biosynthesis; L-histidine biosynthesis; L-histidine from 5-phospho-alpha-D-ribose 1-diphosphate: step 7/9.</text>
</comment>
<comment type="subunit">
    <text evidence="1">Homodimer.</text>
</comment>
<comment type="similarity">
    <text evidence="1">Belongs to the class-II pyridoxal-phosphate-dependent aminotransferase family. Histidinol-phosphate aminotransferase subfamily.</text>
</comment>
<feature type="chain" id="PRO_0000153364" description="Histidinol-phosphate aminotransferase">
    <location>
        <begin position="1"/>
        <end position="350"/>
    </location>
</feature>
<feature type="modified residue" description="N6-(pyridoxal phosphate)lysine" evidence="1">
    <location>
        <position position="212"/>
    </location>
</feature>
<name>HIS8_GEOSL</name>
<sequence>MLPFRSNIAAMAGYVPGYQPPDVASWIKLNTNENPYPPSPEVVKAILAELGGDGALLRTYPSASSQVLRETVGELFGFDPAWIIMANGSDEVLNNLIRAFAGEGEEIGYVHPSYSYYATLAEIQGARVRTFGLTDDLRIAGFPGRYEGKLFFLTTPNSPLGFAFPLAYIEELATRCAGVLVVDEAYADFADGDALDLVRRHENVVVTRTLSKSYSLAGMRLGFAVARPAVIAALDKIRDHYNLDRLAQAACVASLRDQTYFAGCTRLIRETREWFSAEIRTLGYEVIPSQGNFVFAAPPDRDGKRVYDGLYSRKILVRHFSDPLLAHGMRISIGTREEMEATLAALKEIG</sequence>